<gene>
    <name evidence="1" type="primary">aspS</name>
    <name type="ordered locus">LMHCC_1050</name>
</gene>
<accession>B8DHM9</accession>
<keyword id="KW-0030">Aminoacyl-tRNA synthetase</keyword>
<keyword id="KW-0067">ATP-binding</keyword>
<keyword id="KW-0963">Cytoplasm</keyword>
<keyword id="KW-0436">Ligase</keyword>
<keyword id="KW-0547">Nucleotide-binding</keyword>
<keyword id="KW-0648">Protein biosynthesis</keyword>
<evidence type="ECO:0000255" key="1">
    <source>
        <dbReference type="HAMAP-Rule" id="MF_00044"/>
    </source>
</evidence>
<proteinExistence type="inferred from homology"/>
<dbReference type="EC" id="6.1.1.12" evidence="1"/>
<dbReference type="EMBL" id="CP001175">
    <property type="protein sequence ID" value="ACK39398.1"/>
    <property type="molecule type" value="Genomic_DNA"/>
</dbReference>
<dbReference type="RefSeq" id="WP_012581284.1">
    <property type="nucleotide sequence ID" value="NC_011660.1"/>
</dbReference>
<dbReference type="SMR" id="B8DHM9"/>
<dbReference type="KEGG" id="lmh:LMHCC_1050"/>
<dbReference type="HOGENOM" id="CLU_014330_3_2_9"/>
<dbReference type="GO" id="GO:0005737">
    <property type="term" value="C:cytoplasm"/>
    <property type="evidence" value="ECO:0007669"/>
    <property type="project" value="UniProtKB-SubCell"/>
</dbReference>
<dbReference type="GO" id="GO:0004815">
    <property type="term" value="F:aspartate-tRNA ligase activity"/>
    <property type="evidence" value="ECO:0007669"/>
    <property type="project" value="UniProtKB-UniRule"/>
</dbReference>
<dbReference type="GO" id="GO:0005524">
    <property type="term" value="F:ATP binding"/>
    <property type="evidence" value="ECO:0007669"/>
    <property type="project" value="UniProtKB-UniRule"/>
</dbReference>
<dbReference type="GO" id="GO:0140096">
    <property type="term" value="F:catalytic activity, acting on a protein"/>
    <property type="evidence" value="ECO:0007669"/>
    <property type="project" value="UniProtKB-ARBA"/>
</dbReference>
<dbReference type="GO" id="GO:0003676">
    <property type="term" value="F:nucleic acid binding"/>
    <property type="evidence" value="ECO:0007669"/>
    <property type="project" value="InterPro"/>
</dbReference>
<dbReference type="GO" id="GO:0016740">
    <property type="term" value="F:transferase activity"/>
    <property type="evidence" value="ECO:0007669"/>
    <property type="project" value="UniProtKB-ARBA"/>
</dbReference>
<dbReference type="GO" id="GO:0006422">
    <property type="term" value="P:aspartyl-tRNA aminoacylation"/>
    <property type="evidence" value="ECO:0007669"/>
    <property type="project" value="UniProtKB-UniRule"/>
</dbReference>
<dbReference type="CDD" id="cd00777">
    <property type="entry name" value="AspRS_core"/>
    <property type="match status" value="1"/>
</dbReference>
<dbReference type="CDD" id="cd04317">
    <property type="entry name" value="EcAspRS_like_N"/>
    <property type="match status" value="1"/>
</dbReference>
<dbReference type="Gene3D" id="3.30.930.10">
    <property type="entry name" value="Bira Bifunctional Protein, Domain 2"/>
    <property type="match status" value="1"/>
</dbReference>
<dbReference type="Gene3D" id="3.30.1360.30">
    <property type="entry name" value="GAD-like domain"/>
    <property type="match status" value="1"/>
</dbReference>
<dbReference type="Gene3D" id="2.40.50.140">
    <property type="entry name" value="Nucleic acid-binding proteins"/>
    <property type="match status" value="1"/>
</dbReference>
<dbReference type="HAMAP" id="MF_00044">
    <property type="entry name" value="Asp_tRNA_synth_type1"/>
    <property type="match status" value="1"/>
</dbReference>
<dbReference type="InterPro" id="IPR004364">
    <property type="entry name" value="Aa-tRNA-synt_II"/>
</dbReference>
<dbReference type="InterPro" id="IPR006195">
    <property type="entry name" value="aa-tRNA-synth_II"/>
</dbReference>
<dbReference type="InterPro" id="IPR045864">
    <property type="entry name" value="aa-tRNA-synth_II/BPL/LPL"/>
</dbReference>
<dbReference type="InterPro" id="IPR004524">
    <property type="entry name" value="Asp-tRNA-ligase_1"/>
</dbReference>
<dbReference type="InterPro" id="IPR047089">
    <property type="entry name" value="Asp-tRNA-ligase_1_N"/>
</dbReference>
<dbReference type="InterPro" id="IPR002312">
    <property type="entry name" value="Asp/Asn-tRNA-synth_IIb"/>
</dbReference>
<dbReference type="InterPro" id="IPR047090">
    <property type="entry name" value="AspRS_core"/>
</dbReference>
<dbReference type="InterPro" id="IPR004115">
    <property type="entry name" value="GAD-like_sf"/>
</dbReference>
<dbReference type="InterPro" id="IPR029351">
    <property type="entry name" value="GAD_dom"/>
</dbReference>
<dbReference type="InterPro" id="IPR012340">
    <property type="entry name" value="NA-bd_OB-fold"/>
</dbReference>
<dbReference type="InterPro" id="IPR004365">
    <property type="entry name" value="NA-bd_OB_tRNA"/>
</dbReference>
<dbReference type="NCBIfam" id="TIGR00459">
    <property type="entry name" value="aspS_bact"/>
    <property type="match status" value="1"/>
</dbReference>
<dbReference type="NCBIfam" id="NF001750">
    <property type="entry name" value="PRK00476.1"/>
    <property type="match status" value="1"/>
</dbReference>
<dbReference type="PANTHER" id="PTHR22594:SF5">
    <property type="entry name" value="ASPARTATE--TRNA LIGASE, MITOCHONDRIAL"/>
    <property type="match status" value="1"/>
</dbReference>
<dbReference type="PANTHER" id="PTHR22594">
    <property type="entry name" value="ASPARTYL/LYSYL-TRNA SYNTHETASE"/>
    <property type="match status" value="1"/>
</dbReference>
<dbReference type="Pfam" id="PF02938">
    <property type="entry name" value="GAD"/>
    <property type="match status" value="1"/>
</dbReference>
<dbReference type="Pfam" id="PF00152">
    <property type="entry name" value="tRNA-synt_2"/>
    <property type="match status" value="1"/>
</dbReference>
<dbReference type="Pfam" id="PF01336">
    <property type="entry name" value="tRNA_anti-codon"/>
    <property type="match status" value="1"/>
</dbReference>
<dbReference type="PRINTS" id="PR01042">
    <property type="entry name" value="TRNASYNTHASP"/>
</dbReference>
<dbReference type="SUPFAM" id="SSF55681">
    <property type="entry name" value="Class II aaRS and biotin synthetases"/>
    <property type="match status" value="1"/>
</dbReference>
<dbReference type="SUPFAM" id="SSF55261">
    <property type="entry name" value="GAD domain-like"/>
    <property type="match status" value="1"/>
</dbReference>
<dbReference type="SUPFAM" id="SSF50249">
    <property type="entry name" value="Nucleic acid-binding proteins"/>
    <property type="match status" value="1"/>
</dbReference>
<dbReference type="PROSITE" id="PS50862">
    <property type="entry name" value="AA_TRNA_LIGASE_II"/>
    <property type="match status" value="1"/>
</dbReference>
<reference key="1">
    <citation type="journal article" date="2011" name="J. Bacteriol.">
        <title>Genome sequence of lineage III Listeria monocytogenes strain HCC23.</title>
        <authorList>
            <person name="Steele C.L."/>
            <person name="Donaldson J.R."/>
            <person name="Paul D."/>
            <person name="Banes M.M."/>
            <person name="Arick T."/>
            <person name="Bridges S.M."/>
            <person name="Lawrence M.L."/>
        </authorList>
    </citation>
    <scope>NUCLEOTIDE SEQUENCE [LARGE SCALE GENOMIC DNA]</scope>
    <source>
        <strain>HCC23</strain>
    </source>
</reference>
<sequence>MEKRTSYCGELNEAHIGQSVVLHGWVQKRRDLGGLIFIDLRDREGIVQVVFNPEFSKEALEIADSVRNEFVVTIKGTVHARGEKAINEKLATGKVEVLAEEITILNTSKTPPFYIEDGVNVSDELRLKYRYLDLRRPEMNNIFKMRHTVTRTFRNKLDALGFFDIETPYLTKSTPEGARDYLVPSRVYPGNFYALPQSPQILKQLLMTAGFDKYYQIVRCFRDEDLRGDRQPEFTQIDLETSFLTKEEIQAITEDMLVDVVKEAKNITIDKPFPRMTYKEAMDRFGSDKPDIRFGLELQNVSDVVKDVDFKVFQSAIENGGEVKAINAKSAAANFSRKDLDALGVFVANYGAKGLAWLKVEASELKGPIAKFFPEDKAADLKAALQAEDGDLLLFAADKADIVAASLGALRNKLGKDLNLINEEELAFLWVTDWPLFEYDEEAGRYVSAHHPFTLPKEEDIPLLETDSSKVMAEAYDIVLNGYEIGGGSLRIYKKEVQESMFRALGFTDESAKEQFGFLMDALEYGTPPHGGIALGLDRIVMILAGRNNLRDTIAFPKTGSAVDPLTNAPGEVSAAQLAELKLETVKKETN</sequence>
<protein>
    <recommendedName>
        <fullName evidence="1">Aspartate--tRNA ligase</fullName>
        <ecNumber evidence="1">6.1.1.12</ecNumber>
    </recommendedName>
    <alternativeName>
        <fullName evidence="1">Aspartyl-tRNA synthetase</fullName>
        <shortName evidence="1">AspRS</shortName>
    </alternativeName>
</protein>
<feature type="chain" id="PRO_1000198996" description="Aspartate--tRNA ligase">
    <location>
        <begin position="1"/>
        <end position="591"/>
    </location>
</feature>
<feature type="region of interest" description="Aspartate" evidence="1">
    <location>
        <begin position="200"/>
        <end position="203"/>
    </location>
</feature>
<feature type="binding site" evidence="1">
    <location>
        <position position="176"/>
    </location>
    <ligand>
        <name>L-aspartate</name>
        <dbReference type="ChEBI" id="CHEBI:29991"/>
    </ligand>
</feature>
<feature type="binding site" evidence="1">
    <location>
        <begin position="222"/>
        <end position="224"/>
    </location>
    <ligand>
        <name>ATP</name>
        <dbReference type="ChEBI" id="CHEBI:30616"/>
    </ligand>
</feature>
<feature type="binding site" evidence="1">
    <location>
        <position position="222"/>
    </location>
    <ligand>
        <name>L-aspartate</name>
        <dbReference type="ChEBI" id="CHEBI:29991"/>
    </ligand>
</feature>
<feature type="binding site" evidence="1">
    <location>
        <position position="231"/>
    </location>
    <ligand>
        <name>ATP</name>
        <dbReference type="ChEBI" id="CHEBI:30616"/>
    </ligand>
</feature>
<feature type="binding site" evidence="1">
    <location>
        <position position="450"/>
    </location>
    <ligand>
        <name>L-aspartate</name>
        <dbReference type="ChEBI" id="CHEBI:29991"/>
    </ligand>
</feature>
<feature type="binding site" evidence="1">
    <location>
        <position position="484"/>
    </location>
    <ligand>
        <name>ATP</name>
        <dbReference type="ChEBI" id="CHEBI:30616"/>
    </ligand>
</feature>
<feature type="binding site" evidence="1">
    <location>
        <position position="491"/>
    </location>
    <ligand>
        <name>L-aspartate</name>
        <dbReference type="ChEBI" id="CHEBI:29991"/>
    </ligand>
</feature>
<feature type="binding site" evidence="1">
    <location>
        <begin position="536"/>
        <end position="539"/>
    </location>
    <ligand>
        <name>ATP</name>
        <dbReference type="ChEBI" id="CHEBI:30616"/>
    </ligand>
</feature>
<organism>
    <name type="scientific">Listeria monocytogenes serotype 4a (strain HCC23)</name>
    <dbReference type="NCBI Taxonomy" id="552536"/>
    <lineage>
        <taxon>Bacteria</taxon>
        <taxon>Bacillati</taxon>
        <taxon>Bacillota</taxon>
        <taxon>Bacilli</taxon>
        <taxon>Bacillales</taxon>
        <taxon>Listeriaceae</taxon>
        <taxon>Listeria</taxon>
    </lineage>
</organism>
<name>SYD_LISMH</name>
<comment type="function">
    <text evidence="1">Catalyzes the attachment of L-aspartate to tRNA(Asp) in a two-step reaction: L-aspartate is first activated by ATP to form Asp-AMP and then transferred to the acceptor end of tRNA(Asp).</text>
</comment>
<comment type="catalytic activity">
    <reaction evidence="1">
        <text>tRNA(Asp) + L-aspartate + ATP = L-aspartyl-tRNA(Asp) + AMP + diphosphate</text>
        <dbReference type="Rhea" id="RHEA:19649"/>
        <dbReference type="Rhea" id="RHEA-COMP:9660"/>
        <dbReference type="Rhea" id="RHEA-COMP:9678"/>
        <dbReference type="ChEBI" id="CHEBI:29991"/>
        <dbReference type="ChEBI" id="CHEBI:30616"/>
        <dbReference type="ChEBI" id="CHEBI:33019"/>
        <dbReference type="ChEBI" id="CHEBI:78442"/>
        <dbReference type="ChEBI" id="CHEBI:78516"/>
        <dbReference type="ChEBI" id="CHEBI:456215"/>
        <dbReference type="EC" id="6.1.1.12"/>
    </reaction>
</comment>
<comment type="subunit">
    <text evidence="1">Homodimer.</text>
</comment>
<comment type="subcellular location">
    <subcellularLocation>
        <location evidence="1">Cytoplasm</location>
    </subcellularLocation>
</comment>
<comment type="similarity">
    <text evidence="1">Belongs to the class-II aminoacyl-tRNA synthetase family. Type 1 subfamily.</text>
</comment>